<protein>
    <recommendedName>
        <fullName evidence="1">Serine--tRNA ligase</fullName>
        <ecNumber evidence="1">6.1.1.11</ecNumber>
    </recommendedName>
    <alternativeName>
        <fullName evidence="1">Seryl-tRNA synthetase</fullName>
        <shortName evidence="1">SerRS</shortName>
    </alternativeName>
    <alternativeName>
        <fullName evidence="1">Seryl-tRNA(Ser/Sec) synthetase</fullName>
    </alternativeName>
</protein>
<evidence type="ECO:0000255" key="1">
    <source>
        <dbReference type="HAMAP-Rule" id="MF_00176"/>
    </source>
</evidence>
<evidence type="ECO:0000256" key="2">
    <source>
        <dbReference type="SAM" id="MobiDB-lite"/>
    </source>
</evidence>
<dbReference type="EC" id="6.1.1.11" evidence="1"/>
<dbReference type="EMBL" id="CP000608">
    <property type="protein sequence ID" value="ABO47220.1"/>
    <property type="molecule type" value="Genomic_DNA"/>
</dbReference>
<dbReference type="RefSeq" id="WP_003022075.1">
    <property type="nucleotide sequence ID" value="NC_009257.1"/>
</dbReference>
<dbReference type="SMR" id="A4IZ69"/>
<dbReference type="KEGG" id="ftw:FTW_1496"/>
<dbReference type="HOGENOM" id="CLU_023797_1_1_6"/>
<dbReference type="UniPathway" id="UPA00906">
    <property type="reaction ID" value="UER00895"/>
</dbReference>
<dbReference type="GO" id="GO:0005737">
    <property type="term" value="C:cytoplasm"/>
    <property type="evidence" value="ECO:0007669"/>
    <property type="project" value="UniProtKB-SubCell"/>
</dbReference>
<dbReference type="GO" id="GO:0005524">
    <property type="term" value="F:ATP binding"/>
    <property type="evidence" value="ECO:0007669"/>
    <property type="project" value="UniProtKB-UniRule"/>
</dbReference>
<dbReference type="GO" id="GO:0004828">
    <property type="term" value="F:serine-tRNA ligase activity"/>
    <property type="evidence" value="ECO:0007669"/>
    <property type="project" value="UniProtKB-UniRule"/>
</dbReference>
<dbReference type="GO" id="GO:0016260">
    <property type="term" value="P:selenocysteine biosynthetic process"/>
    <property type="evidence" value="ECO:0007669"/>
    <property type="project" value="UniProtKB-UniRule"/>
</dbReference>
<dbReference type="GO" id="GO:0006434">
    <property type="term" value="P:seryl-tRNA aminoacylation"/>
    <property type="evidence" value="ECO:0007669"/>
    <property type="project" value="UniProtKB-UniRule"/>
</dbReference>
<dbReference type="CDD" id="cd00770">
    <property type="entry name" value="SerRS_core"/>
    <property type="match status" value="1"/>
</dbReference>
<dbReference type="Gene3D" id="3.30.930.10">
    <property type="entry name" value="Bira Bifunctional Protein, Domain 2"/>
    <property type="match status" value="1"/>
</dbReference>
<dbReference type="Gene3D" id="1.10.287.40">
    <property type="entry name" value="Serine-tRNA synthetase, tRNA binding domain"/>
    <property type="match status" value="1"/>
</dbReference>
<dbReference type="HAMAP" id="MF_00176">
    <property type="entry name" value="Ser_tRNA_synth_type1"/>
    <property type="match status" value="1"/>
</dbReference>
<dbReference type="InterPro" id="IPR002314">
    <property type="entry name" value="aa-tRNA-synt_IIb"/>
</dbReference>
<dbReference type="InterPro" id="IPR006195">
    <property type="entry name" value="aa-tRNA-synth_II"/>
</dbReference>
<dbReference type="InterPro" id="IPR045864">
    <property type="entry name" value="aa-tRNA-synth_II/BPL/LPL"/>
</dbReference>
<dbReference type="InterPro" id="IPR002317">
    <property type="entry name" value="Ser-tRNA-ligase_type_1"/>
</dbReference>
<dbReference type="InterPro" id="IPR015866">
    <property type="entry name" value="Ser-tRNA-synth_1_N"/>
</dbReference>
<dbReference type="InterPro" id="IPR042103">
    <property type="entry name" value="SerRS_1_N_sf"/>
</dbReference>
<dbReference type="InterPro" id="IPR033729">
    <property type="entry name" value="SerRS_core"/>
</dbReference>
<dbReference type="InterPro" id="IPR010978">
    <property type="entry name" value="tRNA-bd_arm"/>
</dbReference>
<dbReference type="NCBIfam" id="TIGR00414">
    <property type="entry name" value="serS"/>
    <property type="match status" value="1"/>
</dbReference>
<dbReference type="PANTHER" id="PTHR43697:SF1">
    <property type="entry name" value="SERINE--TRNA LIGASE"/>
    <property type="match status" value="1"/>
</dbReference>
<dbReference type="PANTHER" id="PTHR43697">
    <property type="entry name" value="SERYL-TRNA SYNTHETASE"/>
    <property type="match status" value="1"/>
</dbReference>
<dbReference type="Pfam" id="PF02403">
    <property type="entry name" value="Seryl_tRNA_N"/>
    <property type="match status" value="1"/>
</dbReference>
<dbReference type="Pfam" id="PF00587">
    <property type="entry name" value="tRNA-synt_2b"/>
    <property type="match status" value="1"/>
</dbReference>
<dbReference type="PIRSF" id="PIRSF001529">
    <property type="entry name" value="Ser-tRNA-synth_IIa"/>
    <property type="match status" value="1"/>
</dbReference>
<dbReference type="PRINTS" id="PR00981">
    <property type="entry name" value="TRNASYNTHSER"/>
</dbReference>
<dbReference type="SUPFAM" id="SSF55681">
    <property type="entry name" value="Class II aaRS and biotin synthetases"/>
    <property type="match status" value="1"/>
</dbReference>
<dbReference type="SUPFAM" id="SSF46589">
    <property type="entry name" value="tRNA-binding arm"/>
    <property type="match status" value="1"/>
</dbReference>
<dbReference type="PROSITE" id="PS50862">
    <property type="entry name" value="AA_TRNA_LIGASE_II"/>
    <property type="match status" value="1"/>
</dbReference>
<proteinExistence type="inferred from homology"/>
<comment type="function">
    <text evidence="1">Catalyzes the attachment of serine to tRNA(Ser). Is also able to aminoacylate tRNA(Sec) with serine, to form the misacylated tRNA L-seryl-tRNA(Sec), which will be further converted into selenocysteinyl-tRNA(Sec).</text>
</comment>
<comment type="catalytic activity">
    <reaction evidence="1">
        <text>tRNA(Ser) + L-serine + ATP = L-seryl-tRNA(Ser) + AMP + diphosphate + H(+)</text>
        <dbReference type="Rhea" id="RHEA:12292"/>
        <dbReference type="Rhea" id="RHEA-COMP:9669"/>
        <dbReference type="Rhea" id="RHEA-COMP:9703"/>
        <dbReference type="ChEBI" id="CHEBI:15378"/>
        <dbReference type="ChEBI" id="CHEBI:30616"/>
        <dbReference type="ChEBI" id="CHEBI:33019"/>
        <dbReference type="ChEBI" id="CHEBI:33384"/>
        <dbReference type="ChEBI" id="CHEBI:78442"/>
        <dbReference type="ChEBI" id="CHEBI:78533"/>
        <dbReference type="ChEBI" id="CHEBI:456215"/>
        <dbReference type="EC" id="6.1.1.11"/>
    </reaction>
</comment>
<comment type="catalytic activity">
    <reaction evidence="1">
        <text>tRNA(Sec) + L-serine + ATP = L-seryl-tRNA(Sec) + AMP + diphosphate + H(+)</text>
        <dbReference type="Rhea" id="RHEA:42580"/>
        <dbReference type="Rhea" id="RHEA-COMP:9742"/>
        <dbReference type="Rhea" id="RHEA-COMP:10128"/>
        <dbReference type="ChEBI" id="CHEBI:15378"/>
        <dbReference type="ChEBI" id="CHEBI:30616"/>
        <dbReference type="ChEBI" id="CHEBI:33019"/>
        <dbReference type="ChEBI" id="CHEBI:33384"/>
        <dbReference type="ChEBI" id="CHEBI:78442"/>
        <dbReference type="ChEBI" id="CHEBI:78533"/>
        <dbReference type="ChEBI" id="CHEBI:456215"/>
        <dbReference type="EC" id="6.1.1.11"/>
    </reaction>
</comment>
<comment type="pathway">
    <text evidence="1">Aminoacyl-tRNA biosynthesis; selenocysteinyl-tRNA(Sec) biosynthesis; L-seryl-tRNA(Sec) from L-serine and tRNA(Sec): step 1/1.</text>
</comment>
<comment type="subunit">
    <text evidence="1">Homodimer. The tRNA molecule binds across the dimer.</text>
</comment>
<comment type="subcellular location">
    <subcellularLocation>
        <location evidence="1">Cytoplasm</location>
    </subcellularLocation>
</comment>
<comment type="domain">
    <text evidence="1">Consists of two distinct domains, a catalytic core and a N-terminal extension that is involved in tRNA binding.</text>
</comment>
<comment type="similarity">
    <text evidence="1">Belongs to the class-II aminoacyl-tRNA synthetase family. Type-1 seryl-tRNA synthetase subfamily.</text>
</comment>
<feature type="chain" id="PRO_1000019686" description="Serine--tRNA ligase">
    <location>
        <begin position="1"/>
        <end position="426"/>
    </location>
</feature>
<feature type="region of interest" description="Disordered" evidence="2">
    <location>
        <begin position="36"/>
        <end position="66"/>
    </location>
</feature>
<feature type="compositionally biased region" description="Polar residues" evidence="2">
    <location>
        <begin position="46"/>
        <end position="55"/>
    </location>
</feature>
<feature type="binding site" evidence="1">
    <location>
        <begin position="233"/>
        <end position="235"/>
    </location>
    <ligand>
        <name>L-serine</name>
        <dbReference type="ChEBI" id="CHEBI:33384"/>
    </ligand>
</feature>
<feature type="binding site" evidence="1">
    <location>
        <begin position="264"/>
        <end position="266"/>
    </location>
    <ligand>
        <name>ATP</name>
        <dbReference type="ChEBI" id="CHEBI:30616"/>
    </ligand>
</feature>
<feature type="binding site" evidence="1">
    <location>
        <position position="287"/>
    </location>
    <ligand>
        <name>L-serine</name>
        <dbReference type="ChEBI" id="CHEBI:33384"/>
    </ligand>
</feature>
<feature type="binding site" evidence="1">
    <location>
        <begin position="351"/>
        <end position="354"/>
    </location>
    <ligand>
        <name>ATP</name>
        <dbReference type="ChEBI" id="CHEBI:30616"/>
    </ligand>
</feature>
<feature type="binding site" evidence="1">
    <location>
        <position position="387"/>
    </location>
    <ligand>
        <name>L-serine</name>
        <dbReference type="ChEBI" id="CHEBI:33384"/>
    </ligand>
</feature>
<sequence length="426" mass="48585">MLDAKYIKDNLQQVAEKLATRGYQFDIAEFEAQEQKRKHLQERTQDLQSQRNTISKEIGQKKAKGEDTSDIFAKVNQINEELKIIEKELKDLQDTINQTLLSMPNLPADDVPVGKDENDNVEIRRWGTPREFHPEAPAKDHSDIGEILKMIDFKAAAKVTGSRFMVLKNKIAKLHRALSQFMLDLHTEKHGYEELYVPYLVNNDSLYGTGQLPKFAADLFKLEGDFEYSLIPTAEVPITNLVRDEILDTETLPRYYTAHTPCFRSEAGSYGRDTKGMIRQHQFEKVELVHITTADKGEESLELLTSHAEKVLQKLNLPYRVMKLCTGDMGFSAKKTYDLEVWLPSQNTYREISSCSWCGDFQARRMKARHKNPSMKKPELVHTLNGSGLAVGRTLLAIIENYQQEDGSIMVPDALIKYMGGISVIK</sequence>
<accession>A4IZ69</accession>
<gene>
    <name evidence="1" type="primary">serS</name>
    <name type="ordered locus">FTW_1496</name>
</gene>
<reference key="1">
    <citation type="journal article" date="2007" name="PLoS ONE">
        <title>Complete genomic characterization of a pathogenic A.II strain of Francisella tularensis subspecies tularensis.</title>
        <authorList>
            <person name="Beckstrom-Sternberg S.M."/>
            <person name="Auerbach R.K."/>
            <person name="Godbole S."/>
            <person name="Pearson J.V."/>
            <person name="Beckstrom-Sternberg J.S."/>
            <person name="Deng Z."/>
            <person name="Munk C."/>
            <person name="Kubota K."/>
            <person name="Zhou Y."/>
            <person name="Bruce D."/>
            <person name="Noronha J."/>
            <person name="Scheuermann R.H."/>
            <person name="Wang A."/>
            <person name="Wei X."/>
            <person name="Wang J."/>
            <person name="Hao J."/>
            <person name="Wagner D.M."/>
            <person name="Brettin T.S."/>
            <person name="Brown N."/>
            <person name="Gilna P."/>
            <person name="Keim P.S."/>
        </authorList>
    </citation>
    <scope>NUCLEOTIDE SEQUENCE [LARGE SCALE GENOMIC DNA]</scope>
    <source>
        <strain>WY96-3418</strain>
    </source>
</reference>
<name>SYS_FRATW</name>
<organism>
    <name type="scientific">Francisella tularensis subsp. tularensis (strain WY96-3418)</name>
    <dbReference type="NCBI Taxonomy" id="418136"/>
    <lineage>
        <taxon>Bacteria</taxon>
        <taxon>Pseudomonadati</taxon>
        <taxon>Pseudomonadota</taxon>
        <taxon>Gammaproteobacteria</taxon>
        <taxon>Thiotrichales</taxon>
        <taxon>Francisellaceae</taxon>
        <taxon>Francisella</taxon>
    </lineage>
</organism>
<keyword id="KW-0030">Aminoacyl-tRNA synthetase</keyword>
<keyword id="KW-0067">ATP-binding</keyword>
<keyword id="KW-0963">Cytoplasm</keyword>
<keyword id="KW-0436">Ligase</keyword>
<keyword id="KW-0547">Nucleotide-binding</keyword>
<keyword id="KW-0648">Protein biosynthesis</keyword>